<organism>
    <name type="scientific">Treponema pallidum (strain Nichols)</name>
    <dbReference type="NCBI Taxonomy" id="243276"/>
    <lineage>
        <taxon>Bacteria</taxon>
        <taxon>Pseudomonadati</taxon>
        <taxon>Spirochaetota</taxon>
        <taxon>Spirochaetia</taxon>
        <taxon>Spirochaetales</taxon>
        <taxon>Treponemataceae</taxon>
        <taxon>Treponema</taxon>
    </lineage>
</organism>
<sequence length="159" mass="17805">MKAIFAGSFDPPTFGHLDLVLRARSLFAEVHVLVAVNVQKRYLLSECERVDLMRQVLGDRPGVYVFPWRSLVVTYARDVGARVLVRGVRNATDFCQEFDLAWVHRALDAGLETVFLAAKPCYAALRSSMVREVASFGGDVSTFVPRVVARLLQEKFTQA</sequence>
<keyword id="KW-0067">ATP-binding</keyword>
<keyword id="KW-0173">Coenzyme A biosynthesis</keyword>
<keyword id="KW-0963">Cytoplasm</keyword>
<keyword id="KW-0460">Magnesium</keyword>
<keyword id="KW-0547">Nucleotide-binding</keyword>
<keyword id="KW-0548">Nucleotidyltransferase</keyword>
<keyword id="KW-1185">Reference proteome</keyword>
<keyword id="KW-0808">Transferase</keyword>
<name>COAD_TREPA</name>
<protein>
    <recommendedName>
        <fullName evidence="1">Phosphopantetheine adenylyltransferase</fullName>
        <ecNumber evidence="1">2.7.7.3</ecNumber>
    </recommendedName>
    <alternativeName>
        <fullName evidence="1">Dephospho-CoA pyrophosphorylase</fullName>
    </alternativeName>
    <alternativeName>
        <fullName evidence="1">Pantetheine-phosphate adenylyltransferase</fullName>
        <shortName evidence="1">PPAT</shortName>
    </alternativeName>
</protein>
<feature type="chain" id="PRO_0000156300" description="Phosphopantetheine adenylyltransferase">
    <location>
        <begin position="1"/>
        <end position="159"/>
    </location>
</feature>
<feature type="binding site" evidence="1">
    <location>
        <begin position="8"/>
        <end position="9"/>
    </location>
    <ligand>
        <name>ATP</name>
        <dbReference type="ChEBI" id="CHEBI:30616"/>
    </ligand>
</feature>
<feature type="binding site" evidence="1">
    <location>
        <position position="8"/>
    </location>
    <ligand>
        <name>substrate</name>
    </ligand>
</feature>
<feature type="binding site" evidence="1">
    <location>
        <position position="16"/>
    </location>
    <ligand>
        <name>ATP</name>
        <dbReference type="ChEBI" id="CHEBI:30616"/>
    </ligand>
</feature>
<feature type="binding site" evidence="1">
    <location>
        <position position="40"/>
    </location>
    <ligand>
        <name>substrate</name>
    </ligand>
</feature>
<feature type="binding site" evidence="1">
    <location>
        <position position="72"/>
    </location>
    <ligand>
        <name>substrate</name>
    </ligand>
</feature>
<feature type="binding site" evidence="1">
    <location>
        <position position="86"/>
    </location>
    <ligand>
        <name>substrate</name>
    </ligand>
</feature>
<feature type="binding site" evidence="1">
    <location>
        <begin position="87"/>
        <end position="89"/>
    </location>
    <ligand>
        <name>ATP</name>
        <dbReference type="ChEBI" id="CHEBI:30616"/>
    </ligand>
</feature>
<feature type="binding site" evidence="1">
    <location>
        <position position="97"/>
    </location>
    <ligand>
        <name>ATP</name>
        <dbReference type="ChEBI" id="CHEBI:30616"/>
    </ligand>
</feature>
<feature type="binding site" evidence="1">
    <location>
        <begin position="122"/>
        <end position="128"/>
    </location>
    <ligand>
        <name>ATP</name>
        <dbReference type="ChEBI" id="CHEBI:30616"/>
    </ligand>
</feature>
<feature type="site" description="Transition state stabilizer" evidence="1">
    <location>
        <position position="16"/>
    </location>
</feature>
<comment type="function">
    <text evidence="1">Reversibly transfers an adenylyl group from ATP to 4'-phosphopantetheine, yielding dephospho-CoA (dPCoA) and pyrophosphate.</text>
</comment>
<comment type="catalytic activity">
    <reaction evidence="1">
        <text>(R)-4'-phosphopantetheine + ATP + H(+) = 3'-dephospho-CoA + diphosphate</text>
        <dbReference type="Rhea" id="RHEA:19801"/>
        <dbReference type="ChEBI" id="CHEBI:15378"/>
        <dbReference type="ChEBI" id="CHEBI:30616"/>
        <dbReference type="ChEBI" id="CHEBI:33019"/>
        <dbReference type="ChEBI" id="CHEBI:57328"/>
        <dbReference type="ChEBI" id="CHEBI:61723"/>
        <dbReference type="EC" id="2.7.7.3"/>
    </reaction>
</comment>
<comment type="cofactor">
    <cofactor evidence="1">
        <name>Mg(2+)</name>
        <dbReference type="ChEBI" id="CHEBI:18420"/>
    </cofactor>
</comment>
<comment type="pathway">
    <text evidence="1">Cofactor biosynthesis; coenzyme A biosynthesis; CoA from (R)-pantothenate: step 4/5.</text>
</comment>
<comment type="subunit">
    <text evidence="1">Homohexamer.</text>
</comment>
<comment type="subcellular location">
    <subcellularLocation>
        <location evidence="1">Cytoplasm</location>
    </subcellularLocation>
</comment>
<comment type="similarity">
    <text evidence="1">Belongs to the bacterial CoaD family.</text>
</comment>
<reference key="1">
    <citation type="journal article" date="1998" name="Science">
        <title>Complete genome sequence of Treponema pallidum, the syphilis spirochete.</title>
        <authorList>
            <person name="Fraser C.M."/>
            <person name="Norris S.J."/>
            <person name="Weinstock G.M."/>
            <person name="White O."/>
            <person name="Sutton G.G."/>
            <person name="Dodson R.J."/>
            <person name="Gwinn M.L."/>
            <person name="Hickey E.K."/>
            <person name="Clayton R.A."/>
            <person name="Ketchum K.A."/>
            <person name="Sodergren E."/>
            <person name="Hardham J.M."/>
            <person name="McLeod M.P."/>
            <person name="Salzberg S.L."/>
            <person name="Peterson J.D."/>
            <person name="Khalak H.G."/>
            <person name="Richardson D.L."/>
            <person name="Howell J.K."/>
            <person name="Chidambaram M."/>
            <person name="Utterback T.R."/>
            <person name="McDonald L.A."/>
            <person name="Artiach P."/>
            <person name="Bowman C."/>
            <person name="Cotton M.D."/>
            <person name="Fujii C."/>
            <person name="Garland S.A."/>
            <person name="Hatch B."/>
            <person name="Horst K."/>
            <person name="Roberts K.M."/>
            <person name="Sandusky M."/>
            <person name="Weidman J.F."/>
            <person name="Smith H.O."/>
            <person name="Venter J.C."/>
        </authorList>
    </citation>
    <scope>NUCLEOTIDE SEQUENCE [LARGE SCALE GENOMIC DNA]</scope>
    <source>
        <strain>Nichols</strain>
    </source>
</reference>
<dbReference type="EC" id="2.7.7.3" evidence="1"/>
<dbReference type="EMBL" id="AE000520">
    <property type="protein sequence ID" value="AAC65267.1"/>
    <property type="molecule type" value="Genomic_DNA"/>
</dbReference>
<dbReference type="PIR" id="F71343">
    <property type="entry name" value="F71343"/>
</dbReference>
<dbReference type="RefSeq" id="WP_010881732.1">
    <property type="nucleotide sequence ID" value="NC_021490.2"/>
</dbReference>
<dbReference type="SMR" id="O83307"/>
<dbReference type="IntAct" id="O83307">
    <property type="interactions" value="1"/>
</dbReference>
<dbReference type="STRING" id="243276.TP_0283"/>
<dbReference type="EnsemblBacteria" id="AAC65267">
    <property type="protein sequence ID" value="AAC65267"/>
    <property type="gene ID" value="TP_0283"/>
</dbReference>
<dbReference type="GeneID" id="93876074"/>
<dbReference type="KEGG" id="tpa:TP_0283"/>
<dbReference type="KEGG" id="tpw:TPANIC_0283"/>
<dbReference type="eggNOG" id="COG0669">
    <property type="taxonomic scope" value="Bacteria"/>
</dbReference>
<dbReference type="HOGENOM" id="CLU_100149_1_1_12"/>
<dbReference type="OrthoDB" id="9806661at2"/>
<dbReference type="UniPathway" id="UPA00241">
    <property type="reaction ID" value="UER00355"/>
</dbReference>
<dbReference type="Proteomes" id="UP000000811">
    <property type="component" value="Chromosome"/>
</dbReference>
<dbReference type="GO" id="GO:0005737">
    <property type="term" value="C:cytoplasm"/>
    <property type="evidence" value="ECO:0007669"/>
    <property type="project" value="UniProtKB-SubCell"/>
</dbReference>
<dbReference type="GO" id="GO:0005524">
    <property type="term" value="F:ATP binding"/>
    <property type="evidence" value="ECO:0007669"/>
    <property type="project" value="UniProtKB-KW"/>
</dbReference>
<dbReference type="GO" id="GO:0004595">
    <property type="term" value="F:pantetheine-phosphate adenylyltransferase activity"/>
    <property type="evidence" value="ECO:0007669"/>
    <property type="project" value="UniProtKB-UniRule"/>
</dbReference>
<dbReference type="GO" id="GO:0015937">
    <property type="term" value="P:coenzyme A biosynthetic process"/>
    <property type="evidence" value="ECO:0007669"/>
    <property type="project" value="UniProtKB-UniRule"/>
</dbReference>
<dbReference type="CDD" id="cd02163">
    <property type="entry name" value="PPAT"/>
    <property type="match status" value="1"/>
</dbReference>
<dbReference type="Gene3D" id="3.40.50.620">
    <property type="entry name" value="HUPs"/>
    <property type="match status" value="1"/>
</dbReference>
<dbReference type="HAMAP" id="MF_00151">
    <property type="entry name" value="PPAT_bact"/>
    <property type="match status" value="1"/>
</dbReference>
<dbReference type="InterPro" id="IPR004821">
    <property type="entry name" value="Cyt_trans-like"/>
</dbReference>
<dbReference type="InterPro" id="IPR001980">
    <property type="entry name" value="PPAT"/>
</dbReference>
<dbReference type="InterPro" id="IPR014729">
    <property type="entry name" value="Rossmann-like_a/b/a_fold"/>
</dbReference>
<dbReference type="NCBIfam" id="TIGR01510">
    <property type="entry name" value="coaD_prev_kdtB"/>
    <property type="match status" value="1"/>
</dbReference>
<dbReference type="NCBIfam" id="TIGR00125">
    <property type="entry name" value="cyt_tran_rel"/>
    <property type="match status" value="1"/>
</dbReference>
<dbReference type="PANTHER" id="PTHR21342">
    <property type="entry name" value="PHOSPHOPANTETHEINE ADENYLYLTRANSFERASE"/>
    <property type="match status" value="1"/>
</dbReference>
<dbReference type="PANTHER" id="PTHR21342:SF1">
    <property type="entry name" value="PHOSPHOPANTETHEINE ADENYLYLTRANSFERASE"/>
    <property type="match status" value="1"/>
</dbReference>
<dbReference type="Pfam" id="PF01467">
    <property type="entry name" value="CTP_transf_like"/>
    <property type="match status" value="1"/>
</dbReference>
<dbReference type="PRINTS" id="PR01020">
    <property type="entry name" value="LPSBIOSNTHSS"/>
</dbReference>
<dbReference type="SUPFAM" id="SSF52374">
    <property type="entry name" value="Nucleotidylyl transferase"/>
    <property type="match status" value="1"/>
</dbReference>
<accession>O83307</accession>
<gene>
    <name evidence="1" type="primary">coaD</name>
    <name type="synonym">kdtB</name>
    <name type="ordered locus">TP_0283</name>
</gene>
<evidence type="ECO:0000255" key="1">
    <source>
        <dbReference type="HAMAP-Rule" id="MF_00151"/>
    </source>
</evidence>
<proteinExistence type="inferred from homology"/>